<keyword id="KW-0274">FAD</keyword>
<keyword id="KW-0285">Flavoprotein</keyword>
<keyword id="KW-0503">Monooxygenase</keyword>
<keyword id="KW-0520">NAD</keyword>
<keyword id="KW-0560">Oxidoreductase</keyword>
<keyword id="KW-1185">Reference proteome</keyword>
<gene>
    <name evidence="3" type="primary">ligXd</name>
    <name evidence="5" type="ORF">SLG_21200</name>
</gene>
<reference key="1">
    <citation type="journal article" date="2012" name="J. Bacteriol.">
        <title>Complete genome sequence of Sphingobium sp. strain SYK-6, a degrader of lignin-derived biaryls and monoaryls.</title>
        <authorList>
            <person name="Masai E."/>
            <person name="Kamimura N."/>
            <person name="Kasai D."/>
            <person name="Oguchi A."/>
            <person name="Ankai A."/>
            <person name="Fukui S."/>
            <person name="Takahashi M."/>
            <person name="Yashiro I."/>
            <person name="Sasaki H."/>
            <person name="Harada T."/>
            <person name="Nakamura S."/>
            <person name="Katano Y."/>
            <person name="Narita-Yamada S."/>
            <person name="Nakazawa H."/>
            <person name="Hara H."/>
            <person name="Katayama Y."/>
            <person name="Fukuda M."/>
            <person name="Yamazaki S."/>
            <person name="Fujita N."/>
        </authorList>
    </citation>
    <scope>NUCLEOTIDE SEQUENCE [LARGE SCALE GENOMIC DNA]</scope>
    <source>
        <strain>NBRC 103272 / SYK-6</strain>
    </source>
</reference>
<reference key="2">
    <citation type="journal article" date="2014" name="Appl. Environ. Microbiol.">
        <title>Three-component O-demethylase system essential for catabolism of a lignin-derived biphenyl compound in Sphingobium sp. strain SYK-6.</title>
        <authorList>
            <person name="Yoshikata T."/>
            <person name="Suzuki K."/>
            <person name="Kamimura N."/>
            <person name="Namiki M."/>
            <person name="Hishiyama S."/>
            <person name="Araki T."/>
            <person name="Kasai D."/>
            <person name="Otsuka Y."/>
            <person name="Nakamura M."/>
            <person name="Fukuda M."/>
            <person name="Katayama Y."/>
            <person name="Masai E."/>
        </authorList>
    </citation>
    <scope>FUNCTION</scope>
    <scope>CATALYTIC ACTIVITY</scope>
    <scope>COFACTOR</scope>
    <scope>BIOPHYSICOCHEMICAL PROPERTIES</scope>
    <scope>SUBUNIT</scope>
    <scope>DISRUPTION PHENOTYPE</scope>
    <source>
        <strain>NBRC 103272 / SYK-6</strain>
    </source>
</reference>
<evidence type="ECO:0000250" key="1">
    <source>
        <dbReference type="UniProtKB" id="P16640"/>
    </source>
</evidence>
<evidence type="ECO:0000269" key="2">
    <source>
    </source>
</evidence>
<evidence type="ECO:0000303" key="3">
    <source>
    </source>
</evidence>
<evidence type="ECO:0000305" key="4"/>
<evidence type="ECO:0000312" key="5">
    <source>
        <dbReference type="EMBL" id="BAK66795.1"/>
    </source>
</evidence>
<protein>
    <recommendedName>
        <fullName evidence="4">5,5'-dehydrodivanillate O-demethylase ferredoxin reductase subunit</fullName>
        <shortName evidence="4">DDVA O-demethylase ferredoxin reductase subunit</shortName>
        <ecNumber evidence="2">1.14.13.-</ecNumber>
    </recommendedName>
</protein>
<proteinExistence type="evidence at protein level"/>
<comment type="function">
    <text evidence="2">Involved in the catabolism of 5,5'-dehydrodivanillate (DDVA), an intermediate in the biodegradation of lignin. Part of a three-component monooxygenase that catalyzes the O-demethylation of DDVA, leading to the formation of 2,2',3-trihydroxy-3'-methoxy-5,5'-dicarboxybiphenyl (OH-DDVA). LigXd probably transfers the electrons from NADH to LigXc.</text>
</comment>
<comment type="catalytic activity">
    <reaction evidence="2">
        <text>5,5'-dehydrodivanillate + NADH + O2 + H(+) = 2,2',3-trihydroxy-3'-methoxy-5,5'-dicarboxybiphenyl + formaldehyde + NAD(+) + H2O</text>
        <dbReference type="Rhea" id="RHEA:57008"/>
        <dbReference type="ChEBI" id="CHEBI:15377"/>
        <dbReference type="ChEBI" id="CHEBI:15378"/>
        <dbReference type="ChEBI" id="CHEBI:15379"/>
        <dbReference type="ChEBI" id="CHEBI:16842"/>
        <dbReference type="ChEBI" id="CHEBI:57540"/>
        <dbReference type="ChEBI" id="CHEBI:57945"/>
        <dbReference type="ChEBI" id="CHEBI:141401"/>
        <dbReference type="ChEBI" id="CHEBI:141402"/>
    </reaction>
</comment>
<comment type="cofactor">
    <cofactor evidence="2">
        <name>FAD</name>
        <dbReference type="ChEBI" id="CHEBI:57692"/>
    </cofactor>
    <text evidence="2">Binds 1 FAD per monomer.</text>
</comment>
<comment type="biophysicochemical properties">
    <kinetics>
        <KM evidence="2">56 uM for NADH</KM>
        <text evidence="2">kcat is 538 sec(-1) with NADH as substrate.</text>
    </kinetics>
    <phDependence>
        <text evidence="2">Optimum pH is 6.0.</text>
    </phDependence>
    <temperatureDependence>
        <text evidence="2">Optimum temperature is 25-30 degrees Celsius.</text>
    </temperatureDependence>
</comment>
<comment type="subunit">
    <text evidence="2">Monomer. The three-component monooxygenase is composed of an oxygenase (LigXa), a ferredoxin (LigXc) and a ferredoxin reductase (LigXd).</text>
</comment>
<comment type="disruption phenotype">
    <text evidence="2">Disruption mutant shows growth defect on DDVA.</text>
</comment>
<comment type="similarity">
    <text evidence="4">Belongs to the FAD-dependent oxidoreductase family.</text>
</comment>
<sequence length="412" mass="44190">MPHFDCLIVGGGHAGAQAAILLRQLKFEGTVGLISGETEYPYERPPLSKDYLAGEKIFDRILLRPRNFWGDQGIELFLGERVKALQPAEHSLTTASGAEFTYGKLIWAGGGVARRLSCPGGTAKGLFTVRTRADVDAVMAVLPQAERFAIVGGGYIGLEAAAVLSKLGKQVTLIEALDRVLARVAGPELSAFFEDEHRAHGVDVRLACGVEAIEADEQDRATGVRLADGTIIPTDAVIVGIGIVPETGPLLLAGASGGNGVDVDEYCLTSLPDVYAIGDCAAHENRFAEGRRVRVESVQNANDQARTAVQHIIGTPAPYDAVPWFWSNQYDLRLQTVGLAVAHDERVVRGDPATRSFSVVYLRQGHVVALDCVNRTKDYVQGRALVVDGTRVDRDRLADADTPLKELTAAQG</sequence>
<feature type="chain" id="PRO_0000445225" description="5,5'-dehydrodivanillate O-demethylase ferredoxin reductase subunit">
    <location>
        <begin position="1"/>
        <end position="412"/>
    </location>
</feature>
<feature type="binding site" evidence="1">
    <location>
        <position position="14"/>
    </location>
    <ligand>
        <name>FAD</name>
        <dbReference type="ChEBI" id="CHEBI:57692"/>
    </ligand>
</feature>
<feature type="binding site" evidence="1">
    <location>
        <position position="49"/>
    </location>
    <ligand>
        <name>FAD</name>
        <dbReference type="ChEBI" id="CHEBI:57692"/>
    </ligand>
</feature>
<feature type="binding site" evidence="1">
    <location>
        <position position="82"/>
    </location>
    <ligand>
        <name>FAD</name>
        <dbReference type="ChEBI" id="CHEBI:57692"/>
    </ligand>
</feature>
<feature type="binding site" evidence="1">
    <location>
        <position position="130"/>
    </location>
    <ligand>
        <name>FAD</name>
        <dbReference type="ChEBI" id="CHEBI:57692"/>
    </ligand>
</feature>
<feature type="binding site" evidence="1">
    <location>
        <position position="279"/>
    </location>
    <ligand>
        <name>FAD</name>
        <dbReference type="ChEBI" id="CHEBI:57692"/>
    </ligand>
</feature>
<feature type="binding site" evidence="1">
    <location>
        <position position="298"/>
    </location>
    <ligand>
        <name>FAD</name>
        <dbReference type="ChEBI" id="CHEBI:57692"/>
    </ligand>
</feature>
<organism>
    <name type="scientific">Sphingobium sp. (strain NBRC 103272 / SYK-6)</name>
    <dbReference type="NCBI Taxonomy" id="627192"/>
    <lineage>
        <taxon>Bacteria</taxon>
        <taxon>Pseudomonadati</taxon>
        <taxon>Pseudomonadota</taxon>
        <taxon>Alphaproteobacteria</taxon>
        <taxon>Sphingomonadales</taxon>
        <taxon>Sphingomonadaceae</taxon>
        <taxon>Sphingobium</taxon>
    </lineage>
</organism>
<accession>G2ITT5</accession>
<name>LIGXD_SPHSK</name>
<dbReference type="EC" id="1.14.13.-" evidence="2"/>
<dbReference type="EMBL" id="AP012222">
    <property type="protein sequence ID" value="BAK66795.1"/>
    <property type="molecule type" value="Genomic_DNA"/>
</dbReference>
<dbReference type="RefSeq" id="WP_014076440.1">
    <property type="nucleotide sequence ID" value="NC_015976.1"/>
</dbReference>
<dbReference type="SMR" id="G2ITT5"/>
<dbReference type="STRING" id="627192.SLG_21200"/>
<dbReference type="KEGG" id="ssy:SLG_21200"/>
<dbReference type="eggNOG" id="COG1251">
    <property type="taxonomic scope" value="Bacteria"/>
</dbReference>
<dbReference type="HOGENOM" id="CLU_003291_4_0_5"/>
<dbReference type="OrthoDB" id="7809559at2"/>
<dbReference type="Proteomes" id="UP000001275">
    <property type="component" value="Chromosome"/>
</dbReference>
<dbReference type="GO" id="GO:0005737">
    <property type="term" value="C:cytoplasm"/>
    <property type="evidence" value="ECO:0007669"/>
    <property type="project" value="TreeGrafter"/>
</dbReference>
<dbReference type="GO" id="GO:0004497">
    <property type="term" value="F:monooxygenase activity"/>
    <property type="evidence" value="ECO:0007669"/>
    <property type="project" value="UniProtKB-KW"/>
</dbReference>
<dbReference type="GO" id="GO:0016651">
    <property type="term" value="F:oxidoreductase activity, acting on NAD(P)H"/>
    <property type="evidence" value="ECO:0007669"/>
    <property type="project" value="TreeGrafter"/>
</dbReference>
<dbReference type="Gene3D" id="3.30.390.30">
    <property type="match status" value="1"/>
</dbReference>
<dbReference type="Gene3D" id="3.50.50.60">
    <property type="entry name" value="FAD/NAD(P)-binding domain"/>
    <property type="match status" value="2"/>
</dbReference>
<dbReference type="InterPro" id="IPR050446">
    <property type="entry name" value="FAD-oxidoreductase/Apoptosis"/>
</dbReference>
<dbReference type="InterPro" id="IPR036188">
    <property type="entry name" value="FAD/NAD-bd_sf"/>
</dbReference>
<dbReference type="InterPro" id="IPR023753">
    <property type="entry name" value="FAD/NAD-binding_dom"/>
</dbReference>
<dbReference type="InterPro" id="IPR016156">
    <property type="entry name" value="FAD/NAD-linked_Rdtase_dimer_sf"/>
</dbReference>
<dbReference type="InterPro" id="IPR028202">
    <property type="entry name" value="Reductase_C"/>
</dbReference>
<dbReference type="PANTHER" id="PTHR43557">
    <property type="entry name" value="APOPTOSIS-INDUCING FACTOR 1"/>
    <property type="match status" value="1"/>
</dbReference>
<dbReference type="PANTHER" id="PTHR43557:SF2">
    <property type="entry name" value="RIESKE DOMAIN-CONTAINING PROTEIN-RELATED"/>
    <property type="match status" value="1"/>
</dbReference>
<dbReference type="Pfam" id="PF07992">
    <property type="entry name" value="Pyr_redox_2"/>
    <property type="match status" value="1"/>
</dbReference>
<dbReference type="Pfam" id="PF14759">
    <property type="entry name" value="Reductase_C"/>
    <property type="match status" value="1"/>
</dbReference>
<dbReference type="PRINTS" id="PR00368">
    <property type="entry name" value="FADPNR"/>
</dbReference>
<dbReference type="PRINTS" id="PR00411">
    <property type="entry name" value="PNDRDTASEI"/>
</dbReference>
<dbReference type="SUPFAM" id="SSF51905">
    <property type="entry name" value="FAD/NAD(P)-binding domain"/>
    <property type="match status" value="2"/>
</dbReference>
<dbReference type="SUPFAM" id="SSF55424">
    <property type="entry name" value="FAD/NAD-linked reductases, dimerisation (C-terminal) domain"/>
    <property type="match status" value="1"/>
</dbReference>